<keyword id="KW-0032">Aminotransferase</keyword>
<keyword id="KW-0963">Cytoplasm</keyword>
<keyword id="KW-0315">Glutamine amidotransferase</keyword>
<keyword id="KW-1185">Reference proteome</keyword>
<keyword id="KW-0677">Repeat</keyword>
<keyword id="KW-0808">Transferase</keyword>
<protein>
    <recommendedName>
        <fullName evidence="1">Glutamine--fructose-6-phosphate aminotransferase [isomerizing]</fullName>
        <ecNumber evidence="1">2.6.1.16</ecNumber>
    </recommendedName>
    <alternativeName>
        <fullName evidence="1">D-fructose-6-phosphate amidotransferase</fullName>
    </alternativeName>
    <alternativeName>
        <fullName evidence="1">GFAT</fullName>
    </alternativeName>
    <alternativeName>
        <fullName evidence="1">Glucosamine-6-phosphate synthase</fullName>
    </alternativeName>
    <alternativeName>
        <fullName evidence="1">Hexosephosphate aminotransferase</fullName>
    </alternativeName>
    <alternativeName>
        <fullName evidence="1">L-glutamine--D-fructose-6-phosphate amidotransferase</fullName>
    </alternativeName>
</protein>
<evidence type="ECO:0000255" key="1">
    <source>
        <dbReference type="HAMAP-Rule" id="MF_00164"/>
    </source>
</evidence>
<reference key="1">
    <citation type="journal article" date="2001" name="Science">
        <title>Comparative genomics of Listeria species.</title>
        <authorList>
            <person name="Glaser P."/>
            <person name="Frangeul L."/>
            <person name="Buchrieser C."/>
            <person name="Rusniok C."/>
            <person name="Amend A."/>
            <person name="Baquero F."/>
            <person name="Berche P."/>
            <person name="Bloecker H."/>
            <person name="Brandt P."/>
            <person name="Chakraborty T."/>
            <person name="Charbit A."/>
            <person name="Chetouani F."/>
            <person name="Couve E."/>
            <person name="de Daruvar A."/>
            <person name="Dehoux P."/>
            <person name="Domann E."/>
            <person name="Dominguez-Bernal G."/>
            <person name="Duchaud E."/>
            <person name="Durant L."/>
            <person name="Dussurget O."/>
            <person name="Entian K.-D."/>
            <person name="Fsihi H."/>
            <person name="Garcia-del Portillo F."/>
            <person name="Garrido P."/>
            <person name="Gautier L."/>
            <person name="Goebel W."/>
            <person name="Gomez-Lopez N."/>
            <person name="Hain T."/>
            <person name="Hauf J."/>
            <person name="Jackson D."/>
            <person name="Jones L.-M."/>
            <person name="Kaerst U."/>
            <person name="Kreft J."/>
            <person name="Kuhn M."/>
            <person name="Kunst F."/>
            <person name="Kurapkat G."/>
            <person name="Madueno E."/>
            <person name="Maitournam A."/>
            <person name="Mata Vicente J."/>
            <person name="Ng E."/>
            <person name="Nedjari H."/>
            <person name="Nordsiek G."/>
            <person name="Novella S."/>
            <person name="de Pablos B."/>
            <person name="Perez-Diaz J.-C."/>
            <person name="Purcell R."/>
            <person name="Remmel B."/>
            <person name="Rose M."/>
            <person name="Schlueter T."/>
            <person name="Simoes N."/>
            <person name="Tierrez A."/>
            <person name="Vazquez-Boland J.-A."/>
            <person name="Voss H."/>
            <person name="Wehland J."/>
            <person name="Cossart P."/>
        </authorList>
    </citation>
    <scope>NUCLEOTIDE SEQUENCE [LARGE SCALE GENOMIC DNA]</scope>
    <source>
        <strain>ATCC BAA-679 / EGD-e</strain>
    </source>
</reference>
<name>GLMS_LISMO</name>
<gene>
    <name evidence="1" type="primary">glmS</name>
    <name type="ordered locus">lmo0727</name>
</gene>
<sequence>MCGIVGYIGTNNAKGILLEGLEKLEYRGYDSAGIALQNKELVTVVKEKGRIADLASLVPSDAFGTTGIGHTRWATHGKPNHENAHPHQSKSGRFTIVHNGVIENYTLLKEEYLKNHSFVSDTDTEVIVQLIELFAAELSTKEAFKKALSLLHGSYAICLIDQTNTETLYAAKNKSPLLIGKGENFNVIASDAMAVLKETDEFVEIMDKEIVIVTKDGFTLETLEGEEITRASYKAELDASDIEKGTYPHYMLKEIDEQPAVTRKIIQAYQDEAGEINVDKTIIDEILSSDRIHIVACGTSYHAGLVGKNLIEKMAKIPVEVHVSSEFAYNLPLMSKKPLFIFITQSGETADSRQCLVKVKELGYRTLTLTNVPGSTLDREADHSMYLYAGPEIAVASTKAYTAQISVLAVLAVSLGREIGDEEALNINLAAELGIVATAMEAMVSSKEVIEHIAGEYLATSRNAFFLGRNIDYFVAMEAALKLKEISYIQAEGFASGELKHGTIALIEDGTPVLALITQESINWNIRGNVNEVLARGAKTCIFAMENVAQPGDRFVIPQVHPLLTPLASVIPCQLLAYYAALHRDCDVDKPRNLAKSVTVE</sequence>
<proteinExistence type="inferred from homology"/>
<feature type="initiator methionine" description="Removed" evidence="1">
    <location>
        <position position="1"/>
    </location>
</feature>
<feature type="chain" id="PRO_0000135353" description="Glutamine--fructose-6-phosphate aminotransferase [isomerizing]">
    <location>
        <begin position="2"/>
        <end position="601"/>
    </location>
</feature>
<feature type="domain" description="Glutamine amidotransferase type-2" evidence="1">
    <location>
        <begin position="2"/>
        <end position="216"/>
    </location>
</feature>
<feature type="domain" description="SIS 1" evidence="1">
    <location>
        <begin position="282"/>
        <end position="421"/>
    </location>
</feature>
<feature type="domain" description="SIS 2" evidence="1">
    <location>
        <begin position="453"/>
        <end position="591"/>
    </location>
</feature>
<feature type="active site" description="Nucleophile; for GATase activity" evidence="1">
    <location>
        <position position="2"/>
    </location>
</feature>
<feature type="active site" description="For Fru-6P isomerization activity" evidence="1">
    <location>
        <position position="596"/>
    </location>
</feature>
<accession>Q8Y915</accession>
<dbReference type="EC" id="2.6.1.16" evidence="1"/>
<dbReference type="EMBL" id="AL591976">
    <property type="protein sequence ID" value="CAC98805.1"/>
    <property type="molecule type" value="Genomic_DNA"/>
</dbReference>
<dbReference type="PIR" id="AG1165">
    <property type="entry name" value="AG1165"/>
</dbReference>
<dbReference type="RefSeq" id="NP_464254.1">
    <property type="nucleotide sequence ID" value="NC_003210.1"/>
</dbReference>
<dbReference type="RefSeq" id="WP_010989553.1">
    <property type="nucleotide sequence ID" value="NZ_CP149495.1"/>
</dbReference>
<dbReference type="SMR" id="Q8Y915"/>
<dbReference type="STRING" id="169963.gene:17593378"/>
<dbReference type="PaxDb" id="169963-lmo0727"/>
<dbReference type="EnsemblBacteria" id="CAC98805">
    <property type="protein sequence ID" value="CAC98805"/>
    <property type="gene ID" value="CAC98805"/>
</dbReference>
<dbReference type="GeneID" id="986353"/>
<dbReference type="KEGG" id="lmo:lmo0727"/>
<dbReference type="PATRIC" id="fig|169963.11.peg.749"/>
<dbReference type="eggNOG" id="COG0449">
    <property type="taxonomic scope" value="Bacteria"/>
</dbReference>
<dbReference type="HOGENOM" id="CLU_012520_7_1_9"/>
<dbReference type="OrthoDB" id="106547at2"/>
<dbReference type="PhylomeDB" id="Q8Y915"/>
<dbReference type="BioCyc" id="LMON169963:LMO0727-MONOMER"/>
<dbReference type="Proteomes" id="UP000000817">
    <property type="component" value="Chromosome"/>
</dbReference>
<dbReference type="GO" id="GO:0005829">
    <property type="term" value="C:cytosol"/>
    <property type="evidence" value="ECO:0000318"/>
    <property type="project" value="GO_Central"/>
</dbReference>
<dbReference type="GO" id="GO:0097367">
    <property type="term" value="F:carbohydrate derivative binding"/>
    <property type="evidence" value="ECO:0007669"/>
    <property type="project" value="InterPro"/>
</dbReference>
<dbReference type="GO" id="GO:0004360">
    <property type="term" value="F:glutamine-fructose-6-phosphate transaminase (isomerizing) activity"/>
    <property type="evidence" value="ECO:0000318"/>
    <property type="project" value="GO_Central"/>
</dbReference>
<dbReference type="GO" id="GO:0005975">
    <property type="term" value="P:carbohydrate metabolic process"/>
    <property type="evidence" value="ECO:0007669"/>
    <property type="project" value="UniProtKB-UniRule"/>
</dbReference>
<dbReference type="GO" id="GO:0006002">
    <property type="term" value="P:fructose 6-phosphate metabolic process"/>
    <property type="evidence" value="ECO:0000318"/>
    <property type="project" value="GO_Central"/>
</dbReference>
<dbReference type="GO" id="GO:0006487">
    <property type="term" value="P:protein N-linked glycosylation"/>
    <property type="evidence" value="ECO:0000318"/>
    <property type="project" value="GO_Central"/>
</dbReference>
<dbReference type="GO" id="GO:0006047">
    <property type="term" value="P:UDP-N-acetylglucosamine metabolic process"/>
    <property type="evidence" value="ECO:0000318"/>
    <property type="project" value="GO_Central"/>
</dbReference>
<dbReference type="CDD" id="cd00714">
    <property type="entry name" value="GFAT"/>
    <property type="match status" value="1"/>
</dbReference>
<dbReference type="CDD" id="cd05008">
    <property type="entry name" value="SIS_GlmS_GlmD_1"/>
    <property type="match status" value="1"/>
</dbReference>
<dbReference type="CDD" id="cd05009">
    <property type="entry name" value="SIS_GlmS_GlmD_2"/>
    <property type="match status" value="1"/>
</dbReference>
<dbReference type="FunFam" id="3.40.50.10490:FF:000001">
    <property type="entry name" value="Glutamine--fructose-6-phosphate aminotransferase [isomerizing]"/>
    <property type="match status" value="1"/>
</dbReference>
<dbReference type="FunFam" id="3.60.20.10:FF:000006">
    <property type="entry name" value="Glutamine--fructose-6-phosphate aminotransferase [isomerizing]"/>
    <property type="match status" value="1"/>
</dbReference>
<dbReference type="Gene3D" id="3.40.50.10490">
    <property type="entry name" value="Glucose-6-phosphate isomerase like protein, domain 1"/>
    <property type="match status" value="2"/>
</dbReference>
<dbReference type="Gene3D" id="3.60.20.10">
    <property type="entry name" value="Glutamine Phosphoribosylpyrophosphate, subunit 1, domain 1"/>
    <property type="match status" value="1"/>
</dbReference>
<dbReference type="HAMAP" id="MF_00164">
    <property type="entry name" value="GlmS"/>
    <property type="match status" value="1"/>
</dbReference>
<dbReference type="InterPro" id="IPR017932">
    <property type="entry name" value="GATase_2_dom"/>
</dbReference>
<dbReference type="InterPro" id="IPR005855">
    <property type="entry name" value="GFAT"/>
</dbReference>
<dbReference type="InterPro" id="IPR047084">
    <property type="entry name" value="GFAT_N"/>
</dbReference>
<dbReference type="InterPro" id="IPR035466">
    <property type="entry name" value="GlmS/AgaS_SIS"/>
</dbReference>
<dbReference type="InterPro" id="IPR035490">
    <property type="entry name" value="GlmS/FrlB_SIS"/>
</dbReference>
<dbReference type="InterPro" id="IPR029055">
    <property type="entry name" value="Ntn_hydrolases_N"/>
</dbReference>
<dbReference type="InterPro" id="IPR001347">
    <property type="entry name" value="SIS_dom"/>
</dbReference>
<dbReference type="InterPro" id="IPR046348">
    <property type="entry name" value="SIS_dom_sf"/>
</dbReference>
<dbReference type="NCBIfam" id="TIGR01135">
    <property type="entry name" value="glmS"/>
    <property type="match status" value="1"/>
</dbReference>
<dbReference type="NCBIfam" id="NF001484">
    <property type="entry name" value="PRK00331.1"/>
    <property type="match status" value="1"/>
</dbReference>
<dbReference type="PANTHER" id="PTHR10937">
    <property type="entry name" value="GLUCOSAMINE--FRUCTOSE-6-PHOSPHATE AMINOTRANSFERASE, ISOMERIZING"/>
    <property type="match status" value="1"/>
</dbReference>
<dbReference type="PANTHER" id="PTHR10937:SF0">
    <property type="entry name" value="GLUTAMINE--FRUCTOSE-6-PHOSPHATE TRANSAMINASE (ISOMERIZING)"/>
    <property type="match status" value="1"/>
</dbReference>
<dbReference type="Pfam" id="PF13522">
    <property type="entry name" value="GATase_6"/>
    <property type="match status" value="1"/>
</dbReference>
<dbReference type="Pfam" id="PF01380">
    <property type="entry name" value="SIS"/>
    <property type="match status" value="2"/>
</dbReference>
<dbReference type="SUPFAM" id="SSF56235">
    <property type="entry name" value="N-terminal nucleophile aminohydrolases (Ntn hydrolases)"/>
    <property type="match status" value="1"/>
</dbReference>
<dbReference type="SUPFAM" id="SSF53697">
    <property type="entry name" value="SIS domain"/>
    <property type="match status" value="1"/>
</dbReference>
<dbReference type="PROSITE" id="PS51278">
    <property type="entry name" value="GATASE_TYPE_2"/>
    <property type="match status" value="1"/>
</dbReference>
<dbReference type="PROSITE" id="PS51464">
    <property type="entry name" value="SIS"/>
    <property type="match status" value="2"/>
</dbReference>
<comment type="function">
    <text evidence="1">Catalyzes the first step in hexosamine metabolism, converting fructose-6P into glucosamine-6P using glutamine as a nitrogen source.</text>
</comment>
<comment type="catalytic activity">
    <reaction evidence="1">
        <text>D-fructose 6-phosphate + L-glutamine = D-glucosamine 6-phosphate + L-glutamate</text>
        <dbReference type="Rhea" id="RHEA:13237"/>
        <dbReference type="ChEBI" id="CHEBI:29985"/>
        <dbReference type="ChEBI" id="CHEBI:58359"/>
        <dbReference type="ChEBI" id="CHEBI:58725"/>
        <dbReference type="ChEBI" id="CHEBI:61527"/>
        <dbReference type="EC" id="2.6.1.16"/>
    </reaction>
</comment>
<comment type="subunit">
    <text evidence="1">Homodimer.</text>
</comment>
<comment type="subcellular location">
    <subcellularLocation>
        <location evidence="1">Cytoplasm</location>
    </subcellularLocation>
</comment>
<organism>
    <name type="scientific">Listeria monocytogenes serovar 1/2a (strain ATCC BAA-679 / EGD-e)</name>
    <dbReference type="NCBI Taxonomy" id="169963"/>
    <lineage>
        <taxon>Bacteria</taxon>
        <taxon>Bacillati</taxon>
        <taxon>Bacillota</taxon>
        <taxon>Bacilli</taxon>
        <taxon>Bacillales</taxon>
        <taxon>Listeriaceae</taxon>
        <taxon>Listeria</taxon>
    </lineage>
</organism>